<protein>
    <recommendedName>
        <fullName>Phycobilisome rod-core linker polypeptide CpcG1</fullName>
    </recommendedName>
</protein>
<keyword id="KW-0042">Antenna complex</keyword>
<keyword id="KW-0472">Membrane</keyword>
<keyword id="KW-0602">Photosynthesis</keyword>
<keyword id="KW-0605">Phycobilisome</keyword>
<keyword id="KW-1185">Reference proteome</keyword>
<keyword id="KW-0793">Thylakoid</keyword>
<gene>
    <name type="primary">cpcG1</name>
    <name type="ordered locus">tlr1963</name>
</gene>
<proteinExistence type="inferred from homology"/>
<comment type="function">
    <text evidence="1">Rod-core linker protein required for attachment of phycocyanin to allophycocyanin in cores of phycobilisomes.</text>
</comment>
<comment type="function">
    <text evidence="1">Linker polypeptides determine the state of aggregation and the location of the disk-shaped phycobiliprotein units within the phycobilisome and modulate their spectroscopic properties in order to mediate a directed and optimal energy transfer.</text>
</comment>
<comment type="subunit">
    <text evidence="1">The phycobilisome is a hemidiscoidal structure that is composed of two distinct substructures: a core complex and a number of rods radiating from the core.</text>
</comment>
<comment type="subcellular location">
    <subcellularLocation>
        <location evidence="1">Cellular thylakoid membrane</location>
        <topology evidence="1">Peripheral membrane protein</topology>
        <orientation evidence="1">Cytoplasmic side</orientation>
    </subcellularLocation>
</comment>
<comment type="similarity">
    <text evidence="2">Belongs to the phycobilisome linker protein family.</text>
</comment>
<reference key="1">
    <citation type="submission" date="1992-09" db="EMBL/GenBank/DDBJ databases">
        <title>Cloning and sequencing of the phycocyanin operon from the thermophilic cyanobacterium Synechococcus elongatus.</title>
        <authorList>
            <person name="Shimazu T."/>
            <person name="Soga M."/>
            <person name="Hirano M."/>
            <person name="Katoh S."/>
        </authorList>
    </citation>
    <scope>NUCLEOTIDE SEQUENCE [GENOMIC DNA]</scope>
</reference>
<reference key="2">
    <citation type="journal article" date="2002" name="DNA Res.">
        <title>Complete genome structure of the thermophilic cyanobacterium Thermosynechococcus elongatus BP-1.</title>
        <authorList>
            <person name="Nakamura Y."/>
            <person name="Kaneko T."/>
            <person name="Sato S."/>
            <person name="Ikeuchi M."/>
            <person name="Katoh H."/>
            <person name="Sasamoto S."/>
            <person name="Watanabe A."/>
            <person name="Iriguchi M."/>
            <person name="Kawashima K."/>
            <person name="Kimura T."/>
            <person name="Kishida Y."/>
            <person name="Kiyokawa C."/>
            <person name="Kohara M."/>
            <person name="Matsumoto M."/>
            <person name="Matsuno A."/>
            <person name="Nakazaki N."/>
            <person name="Shimpo S."/>
            <person name="Sugimoto M."/>
            <person name="Takeuchi C."/>
            <person name="Yamada M."/>
            <person name="Tabata S."/>
        </authorList>
    </citation>
    <scope>NUCLEOTIDE SEQUENCE [LARGE SCALE GENOMIC DNA]</scope>
    <source>
        <strain>NIES-2133 / IAM M-273 / BP-1</strain>
    </source>
</reference>
<sequence length="277" mass="31624">MSLPLLAVKPRTLDQRVVSYEVPAEDDPVIYRLTDATDAAAVDALIWAAYRQIFSEHLILASYRQPFLESQLRNRAISVRDFIRGLGKSEVYREQVAAVNSNYRLVDISFKRFLGRPTYGQQEQIAWSIILATRGLEGFIDALVDSDEYQQNFGADIVPYQRRRRMARPFNLVNPRYSDYWRNKEISLSGRSYYQARYYASGPLDKQIVRGAIPANFLSMARSIVVPTLDTQRHVARATSSLVKVPNTAQERDLPPTPVKPVPVALPYRYLPSQPKV</sequence>
<name>PYG1_THEVB</name>
<evidence type="ECO:0000250" key="1"/>
<evidence type="ECO:0000255" key="2">
    <source>
        <dbReference type="PROSITE-ProRule" id="PRU00775"/>
    </source>
</evidence>
<accession>P50039</accession>
<feature type="initiator methionine" description="Removed" evidence="1">
    <location>
        <position position="1"/>
    </location>
</feature>
<feature type="chain" id="PRO_0000199253" description="Phycobilisome rod-core linker polypeptide CpcG1">
    <location>
        <begin position="2"/>
        <end position="277"/>
    </location>
</feature>
<feature type="domain" description="PBS-linker" evidence="2">
    <location>
        <begin position="11"/>
        <end position="189"/>
    </location>
</feature>
<dbReference type="EMBL" id="D13173">
    <property type="protein sequence ID" value="BAA02461.1"/>
    <property type="molecule type" value="Genomic_DNA"/>
</dbReference>
<dbReference type="EMBL" id="BA000039">
    <property type="protein sequence ID" value="BAC09515.1"/>
    <property type="molecule type" value="Genomic_DNA"/>
</dbReference>
<dbReference type="RefSeq" id="NP_682753.1">
    <property type="nucleotide sequence ID" value="NC_004113.1"/>
</dbReference>
<dbReference type="RefSeq" id="WP_011057798.1">
    <property type="nucleotide sequence ID" value="NC_004113.1"/>
</dbReference>
<dbReference type="SMR" id="P50039"/>
<dbReference type="STRING" id="197221.gene:10748570"/>
<dbReference type="EnsemblBacteria" id="BAC09515">
    <property type="protein sequence ID" value="BAC09515"/>
    <property type="gene ID" value="BAC09515"/>
</dbReference>
<dbReference type="KEGG" id="tel:tlr1963"/>
<dbReference type="PATRIC" id="fig|197221.4.peg.2053"/>
<dbReference type="eggNOG" id="COG0448">
    <property type="taxonomic scope" value="Bacteria"/>
</dbReference>
<dbReference type="Proteomes" id="UP000000440">
    <property type="component" value="Chromosome"/>
</dbReference>
<dbReference type="GO" id="GO:0030089">
    <property type="term" value="C:phycobilisome"/>
    <property type="evidence" value="ECO:0007669"/>
    <property type="project" value="UniProtKB-KW"/>
</dbReference>
<dbReference type="GO" id="GO:0031676">
    <property type="term" value="C:plasma membrane-derived thylakoid membrane"/>
    <property type="evidence" value="ECO:0007669"/>
    <property type="project" value="UniProtKB-SubCell"/>
</dbReference>
<dbReference type="GO" id="GO:0015979">
    <property type="term" value="P:photosynthesis"/>
    <property type="evidence" value="ECO:0007669"/>
    <property type="project" value="UniProtKB-KW"/>
</dbReference>
<dbReference type="Gene3D" id="1.10.3130.20">
    <property type="entry name" value="Phycobilisome linker domain"/>
    <property type="match status" value="1"/>
</dbReference>
<dbReference type="InterPro" id="IPR001297">
    <property type="entry name" value="PBS_linker_dom"/>
</dbReference>
<dbReference type="InterPro" id="IPR038255">
    <property type="entry name" value="PBS_linker_sf"/>
</dbReference>
<dbReference type="InterPro" id="IPR016470">
    <property type="entry name" value="Phycobilisome"/>
</dbReference>
<dbReference type="PANTHER" id="PTHR34011">
    <property type="entry name" value="PHYCOBILISOME 32.1 KDA LINKER POLYPEPTIDE, PHYCOCYANIN-ASSOCIATED, ROD 2-RELATED"/>
    <property type="match status" value="1"/>
</dbReference>
<dbReference type="Pfam" id="PF00427">
    <property type="entry name" value="PBS_linker_poly"/>
    <property type="match status" value="1"/>
</dbReference>
<dbReference type="PIRSF" id="PIRSF005898">
    <property type="entry name" value="Phycobilisome_CpeC/CpcI"/>
    <property type="match status" value="1"/>
</dbReference>
<dbReference type="PROSITE" id="PS51445">
    <property type="entry name" value="PBS_LINKER"/>
    <property type="match status" value="1"/>
</dbReference>
<organism>
    <name type="scientific">Thermosynechococcus vestitus (strain NIES-2133 / IAM M-273 / BP-1)</name>
    <dbReference type="NCBI Taxonomy" id="197221"/>
    <lineage>
        <taxon>Bacteria</taxon>
        <taxon>Bacillati</taxon>
        <taxon>Cyanobacteriota</taxon>
        <taxon>Cyanophyceae</taxon>
        <taxon>Acaryochloridales</taxon>
        <taxon>Thermosynechococcaceae</taxon>
        <taxon>Thermosynechococcus</taxon>
    </lineage>
</organism>